<comment type="function">
    <text evidence="3">Has low chemotactic activity for eosinophils. May play a role in inflammation and allergy. Has no chitinase activity.</text>
</comment>
<comment type="subcellular location">
    <subcellularLocation>
        <location>Secreted</location>
    </subcellularLocation>
    <subcellularLocation>
        <location>Cytoplasm</location>
    </subcellularLocation>
    <text>Detected in the cytoplasm of keratinocytes.</text>
</comment>
<comment type="tissue specificity">
    <text evidence="4 5">Detected in stratified squamous epithelium in the junctional region between forestomach and glandular stomach (at protein level). Expression is mainly restricted to stomach.</text>
</comment>
<comment type="induction">
    <text evidence="3">Up-regulated in response to IL4 and IL13 and during the allergic response.</text>
</comment>
<comment type="similarity">
    <text evidence="6">Belongs to the glycosyl hydrolase 18 family. Chitinase class II subfamily.</text>
</comment>
<evidence type="ECO:0000250" key="1"/>
<evidence type="ECO:0000255" key="2">
    <source>
        <dbReference type="PROSITE-ProRule" id="PRU01258"/>
    </source>
</evidence>
<evidence type="ECO:0000269" key="3">
    <source>
    </source>
</evidence>
<evidence type="ECO:0000269" key="4">
    <source>
    </source>
</evidence>
<evidence type="ECO:0000269" key="5">
    <source>
    </source>
</evidence>
<evidence type="ECO:0000305" key="6"/>
<evidence type="ECO:0007829" key="7">
    <source>
        <dbReference type="PDB" id="8P8S"/>
    </source>
</evidence>
<evidence type="ECO:0007829" key="8">
    <source>
        <dbReference type="PDB" id="8P8T"/>
    </source>
</evidence>
<organism>
    <name type="scientific">Mus musculus</name>
    <name type="common">Mouse</name>
    <dbReference type="NCBI Taxonomy" id="10090"/>
    <lineage>
        <taxon>Eukaryota</taxon>
        <taxon>Metazoa</taxon>
        <taxon>Chordata</taxon>
        <taxon>Craniata</taxon>
        <taxon>Vertebrata</taxon>
        <taxon>Euteleostomi</taxon>
        <taxon>Mammalia</taxon>
        <taxon>Eutheria</taxon>
        <taxon>Euarchontoglires</taxon>
        <taxon>Glires</taxon>
        <taxon>Rodentia</taxon>
        <taxon>Myomorpha</taxon>
        <taxon>Muroidea</taxon>
        <taxon>Muridae</taxon>
        <taxon>Murinae</taxon>
        <taxon>Mus</taxon>
        <taxon>Mus</taxon>
    </lineage>
</organism>
<accession>Q91Z98</accession>
<accession>Q3V2C9</accession>
<accession>Q8VH43</accession>
<accession>Q8VHG1</accession>
<gene>
    <name type="primary">Chil4</name>
    <name type="synonym">Chi3l4</name>
    <name type="synonym">Ym2</name>
</gene>
<name>CHIL4_MOUSE</name>
<protein>
    <recommendedName>
        <fullName>Chitinase-like protein 4</fullName>
    </recommendedName>
    <alternativeName>
        <fullName>Chitinase-3-like protein 4</fullName>
    </alternativeName>
    <alternativeName>
        <fullName>Secreted protein Ym2</fullName>
    </alternativeName>
</protein>
<sequence length="402" mass="44975">MAKLILVTGLAILLNVQLGSSYQLMCYYTSWAKDRPTEGSFKPGNIDPCLCTHLIYAFAGMKNNEITYLSEQDLRDYEALNGLKDRNTELKTLLAIGGWKFGPAPFSSMVSTPQNRQTFIKSVIRFLRQYNFDGLNLDWQYPGSRGSPPKDKHLFSVLVQEMRKAFEEESTLNHIPRLLLTSTGAGFIDVIKSGYKIPELSQSLDYIQVMTYDLHDPKNGYTGENSPLYKSPYDIGKSADLNVDSIITYWKDHGAASEKLIVGFPAYGHTFILSDPSKNGIGDPTVSAGPPGKYTNEQGLLAYFEICTFLNEGATEIFDATQEVPYAYLGNEWVGYDNVRSFKLKAQWLKDNNLGGAVVWPLDMDDFSGSFCHQGRFPLTTTLKRDLNVHSASCKASYRGEL</sequence>
<dbReference type="EMBL" id="AY049765">
    <property type="protein sequence ID" value="AAL03953.2"/>
    <property type="molecule type" value="mRNA"/>
</dbReference>
<dbReference type="EMBL" id="AF461142">
    <property type="protein sequence ID" value="AAL66748.1"/>
    <property type="molecule type" value="Genomic_DNA"/>
</dbReference>
<dbReference type="EMBL" id="AY065557">
    <property type="protein sequence ID" value="AAL57751.1"/>
    <property type="molecule type" value="mRNA"/>
</dbReference>
<dbReference type="EMBL" id="AK131914">
    <property type="protein sequence ID" value="BAE20869.1"/>
    <property type="molecule type" value="mRNA"/>
</dbReference>
<dbReference type="EMBL" id="BC130015">
    <property type="protein sequence ID" value="AAI30016.1"/>
    <property type="molecule type" value="mRNA"/>
</dbReference>
<dbReference type="CCDS" id="CCDS17719.1"/>
<dbReference type="RefSeq" id="NP_660108.2">
    <property type="nucleotide sequence ID" value="NM_145126.2"/>
</dbReference>
<dbReference type="PDB" id="8P8S">
    <property type="method" value="X-ray"/>
    <property type="resolution" value="1.17 A"/>
    <property type="chains" value="A=22-402"/>
</dbReference>
<dbReference type="PDB" id="8P8T">
    <property type="method" value="X-ray"/>
    <property type="resolution" value="1.71 A"/>
    <property type="chains" value="A=1-402"/>
</dbReference>
<dbReference type="PDBsum" id="8P8S"/>
<dbReference type="PDBsum" id="8P8T"/>
<dbReference type="SMR" id="Q91Z98"/>
<dbReference type="BioGRID" id="222433">
    <property type="interactions" value="1"/>
</dbReference>
<dbReference type="FunCoup" id="Q91Z98">
    <property type="interactions" value="37"/>
</dbReference>
<dbReference type="STRING" id="10090.ENSMUSP00000080851"/>
<dbReference type="CAZy" id="GH18">
    <property type="family name" value="Glycoside Hydrolase Family 18"/>
</dbReference>
<dbReference type="iPTMnet" id="Q91Z98"/>
<dbReference type="PhosphoSitePlus" id="Q91Z98"/>
<dbReference type="jPOST" id="Q91Z98"/>
<dbReference type="PaxDb" id="10090-ENSMUSP00000080851"/>
<dbReference type="PeptideAtlas" id="Q91Z98"/>
<dbReference type="ProteomicsDB" id="283904"/>
<dbReference type="DNASU" id="104183"/>
<dbReference type="Ensembl" id="ENSMUST00000082219.6">
    <property type="protein sequence ID" value="ENSMUSP00000080851.6"/>
    <property type="gene ID" value="ENSMUSG00000063779.7"/>
</dbReference>
<dbReference type="GeneID" id="104183"/>
<dbReference type="KEGG" id="mmu:104183"/>
<dbReference type="UCSC" id="uc008qvx.2">
    <property type="organism name" value="mouse"/>
</dbReference>
<dbReference type="AGR" id="MGI:1341098"/>
<dbReference type="CTD" id="104183"/>
<dbReference type="MGI" id="MGI:1341098">
    <property type="gene designation" value="Chil4"/>
</dbReference>
<dbReference type="VEuPathDB" id="HostDB:ENSMUSG00000063779"/>
<dbReference type="eggNOG" id="KOG2806">
    <property type="taxonomic scope" value="Eukaryota"/>
</dbReference>
<dbReference type="GeneTree" id="ENSGT00940000154557"/>
<dbReference type="HOGENOM" id="CLU_002833_3_1_1"/>
<dbReference type="InParanoid" id="Q91Z98"/>
<dbReference type="OMA" id="NAINDHL"/>
<dbReference type="OrthoDB" id="76388at2759"/>
<dbReference type="PhylomeDB" id="Q91Z98"/>
<dbReference type="TreeFam" id="TF315610"/>
<dbReference type="BioGRID-ORCS" id="104183">
    <property type="hits" value="3 hits in 76 CRISPR screens"/>
</dbReference>
<dbReference type="PRO" id="PR:Q91Z98"/>
<dbReference type="Proteomes" id="UP000000589">
    <property type="component" value="Chromosome 3"/>
</dbReference>
<dbReference type="RNAct" id="Q91Z98">
    <property type="molecule type" value="protein"/>
</dbReference>
<dbReference type="Bgee" id="ENSMUSG00000063779">
    <property type="expression patterns" value="Expressed in olfactory epithelium and 16 other cell types or tissues"/>
</dbReference>
<dbReference type="GO" id="GO:0005737">
    <property type="term" value="C:cytoplasm"/>
    <property type="evidence" value="ECO:0000314"/>
    <property type="project" value="MGI"/>
</dbReference>
<dbReference type="GO" id="GO:0005576">
    <property type="term" value="C:extracellular region"/>
    <property type="evidence" value="ECO:0007669"/>
    <property type="project" value="UniProtKB-SubCell"/>
</dbReference>
<dbReference type="GO" id="GO:0008061">
    <property type="term" value="F:chitin binding"/>
    <property type="evidence" value="ECO:0007669"/>
    <property type="project" value="InterPro"/>
</dbReference>
<dbReference type="GO" id="GO:0005975">
    <property type="term" value="P:carbohydrate metabolic process"/>
    <property type="evidence" value="ECO:0007669"/>
    <property type="project" value="InterPro"/>
</dbReference>
<dbReference type="GO" id="GO:0006954">
    <property type="term" value="P:inflammatory response"/>
    <property type="evidence" value="ECO:0007669"/>
    <property type="project" value="UniProtKB-KW"/>
</dbReference>
<dbReference type="CDD" id="cd02872">
    <property type="entry name" value="GH18_chitolectin_chitotriosidase"/>
    <property type="match status" value="1"/>
</dbReference>
<dbReference type="FunFam" id="3.20.20.80:FF:000007">
    <property type="entry name" value="Acidic mammalian chitinase"/>
    <property type="match status" value="1"/>
</dbReference>
<dbReference type="FunFam" id="3.10.50.10:FF:000001">
    <property type="entry name" value="Chitinase 3-like 1"/>
    <property type="match status" value="1"/>
</dbReference>
<dbReference type="Gene3D" id="3.10.50.10">
    <property type="match status" value="1"/>
</dbReference>
<dbReference type="Gene3D" id="3.20.20.80">
    <property type="entry name" value="Glycosidases"/>
    <property type="match status" value="1"/>
</dbReference>
<dbReference type="InterPro" id="IPR011583">
    <property type="entry name" value="Chitinase_II/V-like_cat"/>
</dbReference>
<dbReference type="InterPro" id="IPR029070">
    <property type="entry name" value="Chitinase_insertion_sf"/>
</dbReference>
<dbReference type="InterPro" id="IPR001223">
    <property type="entry name" value="Glyco_hydro18_cat"/>
</dbReference>
<dbReference type="InterPro" id="IPR017853">
    <property type="entry name" value="Glycoside_hydrolase_SF"/>
</dbReference>
<dbReference type="InterPro" id="IPR050314">
    <property type="entry name" value="Glycosyl_Hydrlase_18"/>
</dbReference>
<dbReference type="PANTHER" id="PTHR11177">
    <property type="entry name" value="CHITINASE"/>
    <property type="match status" value="1"/>
</dbReference>
<dbReference type="PANTHER" id="PTHR11177:SF140">
    <property type="entry name" value="CHITINASE-LIKE PROTEIN 3-RELATED"/>
    <property type="match status" value="1"/>
</dbReference>
<dbReference type="Pfam" id="PF00704">
    <property type="entry name" value="Glyco_hydro_18"/>
    <property type="match status" value="1"/>
</dbReference>
<dbReference type="SMART" id="SM00636">
    <property type="entry name" value="Glyco_18"/>
    <property type="match status" value="1"/>
</dbReference>
<dbReference type="SUPFAM" id="SSF51445">
    <property type="entry name" value="(Trans)glycosidases"/>
    <property type="match status" value="1"/>
</dbReference>
<dbReference type="SUPFAM" id="SSF54556">
    <property type="entry name" value="Chitinase insertion domain"/>
    <property type="match status" value="1"/>
</dbReference>
<dbReference type="PROSITE" id="PS51910">
    <property type="entry name" value="GH18_2"/>
    <property type="match status" value="1"/>
</dbReference>
<reference key="1">
    <citation type="journal article" date="2001" name="J. Biol. Chem.">
        <title>Expression of the Ym2 lectin-binding protein is dependent on interleukin (IL)-4 and IL-13 signal transduction: identification of a novel allergy-associated protein.</title>
        <authorList>
            <person name="Webb D.C."/>
            <person name="McKenzie A.N.J."/>
            <person name="Foster P.S."/>
        </authorList>
    </citation>
    <scope>NUCLEOTIDE SEQUENCE [MRNA]</scope>
    <scope>PROTEIN SEQUENCE OF 22-33</scope>
    <scope>FUNCTION</scope>
    <scope>SUBCELLULAR LOCATION</scope>
    <scope>INDUCTION</scope>
    <source>
        <strain>BALB/cJ</strain>
    </source>
</reference>
<reference key="2">
    <citation type="submission" date="2002-01" db="EMBL/GenBank/DDBJ databases">
        <authorList>
            <person name="Su W.B."/>
            <person name="Chang N.-C.A."/>
        </authorList>
    </citation>
    <scope>NUCLEOTIDE SEQUENCE [GENOMIC DNA / MRNA]</scope>
    <source>
        <strain>129/Ola</strain>
        <strain>BALB/cJ</strain>
        <tissue>Stomach</tissue>
    </source>
</reference>
<reference key="3">
    <citation type="journal article" date="2005" name="Science">
        <title>The transcriptional landscape of the mammalian genome.</title>
        <authorList>
            <person name="Carninci P."/>
            <person name="Kasukawa T."/>
            <person name="Katayama S."/>
            <person name="Gough J."/>
            <person name="Frith M.C."/>
            <person name="Maeda N."/>
            <person name="Oyama R."/>
            <person name="Ravasi T."/>
            <person name="Lenhard B."/>
            <person name="Wells C."/>
            <person name="Kodzius R."/>
            <person name="Shimokawa K."/>
            <person name="Bajic V.B."/>
            <person name="Brenner S.E."/>
            <person name="Batalov S."/>
            <person name="Forrest A.R."/>
            <person name="Zavolan M."/>
            <person name="Davis M.J."/>
            <person name="Wilming L.G."/>
            <person name="Aidinis V."/>
            <person name="Allen J.E."/>
            <person name="Ambesi-Impiombato A."/>
            <person name="Apweiler R."/>
            <person name="Aturaliya R.N."/>
            <person name="Bailey T.L."/>
            <person name="Bansal M."/>
            <person name="Baxter L."/>
            <person name="Beisel K.W."/>
            <person name="Bersano T."/>
            <person name="Bono H."/>
            <person name="Chalk A.M."/>
            <person name="Chiu K.P."/>
            <person name="Choudhary V."/>
            <person name="Christoffels A."/>
            <person name="Clutterbuck D.R."/>
            <person name="Crowe M.L."/>
            <person name="Dalla E."/>
            <person name="Dalrymple B.P."/>
            <person name="de Bono B."/>
            <person name="Della Gatta G."/>
            <person name="di Bernardo D."/>
            <person name="Down T."/>
            <person name="Engstrom P."/>
            <person name="Fagiolini M."/>
            <person name="Faulkner G."/>
            <person name="Fletcher C.F."/>
            <person name="Fukushima T."/>
            <person name="Furuno M."/>
            <person name="Futaki S."/>
            <person name="Gariboldi M."/>
            <person name="Georgii-Hemming P."/>
            <person name="Gingeras T.R."/>
            <person name="Gojobori T."/>
            <person name="Green R.E."/>
            <person name="Gustincich S."/>
            <person name="Harbers M."/>
            <person name="Hayashi Y."/>
            <person name="Hensch T.K."/>
            <person name="Hirokawa N."/>
            <person name="Hill D."/>
            <person name="Huminiecki L."/>
            <person name="Iacono M."/>
            <person name="Ikeo K."/>
            <person name="Iwama A."/>
            <person name="Ishikawa T."/>
            <person name="Jakt M."/>
            <person name="Kanapin A."/>
            <person name="Katoh M."/>
            <person name="Kawasawa Y."/>
            <person name="Kelso J."/>
            <person name="Kitamura H."/>
            <person name="Kitano H."/>
            <person name="Kollias G."/>
            <person name="Krishnan S.P."/>
            <person name="Kruger A."/>
            <person name="Kummerfeld S.K."/>
            <person name="Kurochkin I.V."/>
            <person name="Lareau L.F."/>
            <person name="Lazarevic D."/>
            <person name="Lipovich L."/>
            <person name="Liu J."/>
            <person name="Liuni S."/>
            <person name="McWilliam S."/>
            <person name="Madan Babu M."/>
            <person name="Madera M."/>
            <person name="Marchionni L."/>
            <person name="Matsuda H."/>
            <person name="Matsuzawa S."/>
            <person name="Miki H."/>
            <person name="Mignone F."/>
            <person name="Miyake S."/>
            <person name="Morris K."/>
            <person name="Mottagui-Tabar S."/>
            <person name="Mulder N."/>
            <person name="Nakano N."/>
            <person name="Nakauchi H."/>
            <person name="Ng P."/>
            <person name="Nilsson R."/>
            <person name="Nishiguchi S."/>
            <person name="Nishikawa S."/>
            <person name="Nori F."/>
            <person name="Ohara O."/>
            <person name="Okazaki Y."/>
            <person name="Orlando V."/>
            <person name="Pang K.C."/>
            <person name="Pavan W.J."/>
            <person name="Pavesi G."/>
            <person name="Pesole G."/>
            <person name="Petrovsky N."/>
            <person name="Piazza S."/>
            <person name="Reed J."/>
            <person name="Reid J.F."/>
            <person name="Ring B.Z."/>
            <person name="Ringwald M."/>
            <person name="Rost B."/>
            <person name="Ruan Y."/>
            <person name="Salzberg S.L."/>
            <person name="Sandelin A."/>
            <person name="Schneider C."/>
            <person name="Schoenbach C."/>
            <person name="Sekiguchi K."/>
            <person name="Semple C.A."/>
            <person name="Seno S."/>
            <person name="Sessa L."/>
            <person name="Sheng Y."/>
            <person name="Shibata Y."/>
            <person name="Shimada H."/>
            <person name="Shimada K."/>
            <person name="Silva D."/>
            <person name="Sinclair B."/>
            <person name="Sperling S."/>
            <person name="Stupka E."/>
            <person name="Sugiura K."/>
            <person name="Sultana R."/>
            <person name="Takenaka Y."/>
            <person name="Taki K."/>
            <person name="Tammoja K."/>
            <person name="Tan S.L."/>
            <person name="Tang S."/>
            <person name="Taylor M.S."/>
            <person name="Tegner J."/>
            <person name="Teichmann S.A."/>
            <person name="Ueda H.R."/>
            <person name="van Nimwegen E."/>
            <person name="Verardo R."/>
            <person name="Wei C.L."/>
            <person name="Yagi K."/>
            <person name="Yamanishi H."/>
            <person name="Zabarovsky E."/>
            <person name="Zhu S."/>
            <person name="Zimmer A."/>
            <person name="Hide W."/>
            <person name="Bult C."/>
            <person name="Grimmond S.M."/>
            <person name="Teasdale R.D."/>
            <person name="Liu E.T."/>
            <person name="Brusic V."/>
            <person name="Quackenbush J."/>
            <person name="Wahlestedt C."/>
            <person name="Mattick J.S."/>
            <person name="Hume D.A."/>
            <person name="Kai C."/>
            <person name="Sasaki D."/>
            <person name="Tomaru Y."/>
            <person name="Fukuda S."/>
            <person name="Kanamori-Katayama M."/>
            <person name="Suzuki M."/>
            <person name="Aoki J."/>
            <person name="Arakawa T."/>
            <person name="Iida J."/>
            <person name="Imamura K."/>
            <person name="Itoh M."/>
            <person name="Kato T."/>
            <person name="Kawaji H."/>
            <person name="Kawagashira N."/>
            <person name="Kawashima T."/>
            <person name="Kojima M."/>
            <person name="Kondo S."/>
            <person name="Konno H."/>
            <person name="Nakano K."/>
            <person name="Ninomiya N."/>
            <person name="Nishio T."/>
            <person name="Okada M."/>
            <person name="Plessy C."/>
            <person name="Shibata K."/>
            <person name="Shiraki T."/>
            <person name="Suzuki S."/>
            <person name="Tagami M."/>
            <person name="Waki K."/>
            <person name="Watahiki A."/>
            <person name="Okamura-Oho Y."/>
            <person name="Suzuki H."/>
            <person name="Kawai J."/>
            <person name="Hayashizaki Y."/>
        </authorList>
    </citation>
    <scope>NUCLEOTIDE SEQUENCE [LARGE SCALE MRNA]</scope>
    <source>
        <strain>C57BL/6J</strain>
        <tissue>Tongue</tissue>
    </source>
</reference>
<reference key="4">
    <citation type="journal article" date="2004" name="Genome Res.">
        <title>The status, quality, and expansion of the NIH full-length cDNA project: the Mammalian Gene Collection (MGC).</title>
        <authorList>
            <consortium name="The MGC Project Team"/>
        </authorList>
    </citation>
    <scope>NUCLEOTIDE SEQUENCE [LARGE SCALE MRNA]</scope>
</reference>
<reference key="5">
    <citation type="journal article" date="1998" name="Genomics">
        <title>Genetic characterization of the murine Ym1 gene and identification of a cluster of highly homologous genes.</title>
        <authorList>
            <person name="Jin H.M."/>
            <person name="Copeland N.G."/>
            <person name="Gilbert D.J."/>
            <person name="Jenkins N.A."/>
            <person name="Kirkpatrick R.B."/>
            <person name="Rosenberg M."/>
        </authorList>
    </citation>
    <scope>NUCLEOTIDE SEQUENCE [GENOMIC DNA] OF 203-392</scope>
    <scope>TISSUE SPECIFICITY</scope>
    <source>
        <strain>129/SvJ</strain>
    </source>
</reference>
<reference key="6">
    <citation type="journal article" date="2004" name="Histochem. Cell Biol.">
        <title>Cellular expression of murine Ym1 and Ym2, chitinase family proteins, as revealed by in situ hybridization and immunohistochemistry.</title>
        <authorList>
            <person name="Nio J."/>
            <person name="Fujimoto W."/>
            <person name="Konno A."/>
            <person name="Kon Y."/>
            <person name="Owhashi M."/>
            <person name="Iwanaga T."/>
        </authorList>
    </citation>
    <scope>SUBCELLULAR LOCATION</scope>
    <scope>TISSUE SPECIFICITY</scope>
</reference>
<keyword id="KW-0002">3D-structure</keyword>
<keyword id="KW-0963">Cytoplasm</keyword>
<keyword id="KW-0903">Direct protein sequencing</keyword>
<keyword id="KW-1015">Disulfide bond</keyword>
<keyword id="KW-0395">Inflammatory response</keyword>
<keyword id="KW-1185">Reference proteome</keyword>
<keyword id="KW-0964">Secreted</keyword>
<keyword id="KW-0732">Signal</keyword>
<proteinExistence type="evidence at protein level"/>
<feature type="signal peptide" evidence="3">
    <location>
        <begin position="1"/>
        <end position="21"/>
    </location>
</feature>
<feature type="chain" id="PRO_0000011971" description="Chitinase-like protein 4">
    <location>
        <begin position="22"/>
        <end position="402"/>
    </location>
</feature>
<feature type="domain" description="GH18" evidence="2">
    <location>
        <begin position="22"/>
        <end position="390"/>
    </location>
</feature>
<feature type="binding site" evidence="2">
    <location>
        <begin position="70"/>
        <end position="71"/>
    </location>
    <ligand>
        <name>chitin</name>
        <dbReference type="ChEBI" id="CHEBI:17029"/>
    </ligand>
</feature>
<feature type="binding site" evidence="2">
    <location>
        <begin position="97"/>
        <end position="100"/>
    </location>
    <ligand>
        <name>chitin</name>
        <dbReference type="ChEBI" id="CHEBI:17029"/>
    </ligand>
</feature>
<feature type="binding site" evidence="2">
    <location>
        <position position="141"/>
    </location>
    <ligand>
        <name>chitin</name>
        <dbReference type="ChEBI" id="CHEBI:17029"/>
    </ligand>
</feature>
<feature type="binding site" evidence="2">
    <location>
        <begin position="210"/>
        <end position="213"/>
    </location>
    <ligand>
        <name>chitin</name>
        <dbReference type="ChEBI" id="CHEBI:17029"/>
    </ligand>
</feature>
<feature type="binding site" evidence="2">
    <location>
        <position position="360"/>
    </location>
    <ligand>
        <name>chitin</name>
        <dbReference type="ChEBI" id="CHEBI:17029"/>
    </ligand>
</feature>
<feature type="disulfide bond" evidence="2">
    <location>
        <begin position="26"/>
        <end position="51"/>
    </location>
</feature>
<feature type="disulfide bond" evidence="1">
    <location>
        <begin position="307"/>
        <end position="372"/>
    </location>
</feature>
<feature type="sequence conflict" description="In Ref. 5; no nucleotide entry." evidence="6" ref="5">
    <original>V</original>
    <variation>I</variation>
    <location>
        <position position="286"/>
    </location>
</feature>
<feature type="sequence conflict" description="In Ref. 5; no nucleotide entry." evidence="6" ref="5">
    <original>A</original>
    <variation>T</variation>
    <location>
        <position position="288"/>
    </location>
</feature>
<feature type="sequence conflict" description="In Ref. 5; no nucleotide entry." evidence="6" ref="5">
    <original>P</original>
    <variation>R</variation>
    <location>
        <position position="361"/>
    </location>
</feature>
<feature type="strand" evidence="7">
    <location>
        <begin position="23"/>
        <end position="29"/>
    </location>
</feature>
<feature type="helix" evidence="7">
    <location>
        <begin position="30"/>
        <end position="34"/>
    </location>
</feature>
<feature type="helix" evidence="7">
    <location>
        <begin position="37"/>
        <end position="39"/>
    </location>
</feature>
<feature type="helix" evidence="7">
    <location>
        <begin position="43"/>
        <end position="45"/>
    </location>
</feature>
<feature type="strand" evidence="7">
    <location>
        <begin position="52"/>
        <end position="62"/>
    </location>
</feature>
<feature type="strand" evidence="7">
    <location>
        <begin position="65"/>
        <end position="67"/>
    </location>
</feature>
<feature type="helix" evidence="7">
    <location>
        <begin position="71"/>
        <end position="82"/>
    </location>
</feature>
<feature type="helix" evidence="7">
    <location>
        <begin position="83"/>
        <end position="85"/>
    </location>
</feature>
<feature type="strand" evidence="7">
    <location>
        <begin position="91"/>
        <end position="97"/>
    </location>
</feature>
<feature type="turn" evidence="7">
    <location>
        <begin position="99"/>
        <end position="101"/>
    </location>
</feature>
<feature type="helix" evidence="7">
    <location>
        <begin position="104"/>
        <end position="110"/>
    </location>
</feature>
<feature type="helix" evidence="7">
    <location>
        <begin position="113"/>
        <end position="129"/>
    </location>
</feature>
<feature type="strand" evidence="7">
    <location>
        <begin position="134"/>
        <end position="138"/>
    </location>
</feature>
<feature type="helix" evidence="7">
    <location>
        <begin position="150"/>
        <end position="173"/>
    </location>
</feature>
<feature type="strand" evidence="7">
    <location>
        <begin position="179"/>
        <end position="184"/>
    </location>
</feature>
<feature type="helix" evidence="7">
    <location>
        <begin position="188"/>
        <end position="194"/>
    </location>
</feature>
<feature type="helix" evidence="7">
    <location>
        <begin position="197"/>
        <end position="203"/>
    </location>
</feature>
<feature type="strand" evidence="7">
    <location>
        <begin position="205"/>
        <end position="209"/>
    </location>
</feature>
<feature type="helix" evidence="7">
    <location>
        <begin position="217"/>
        <end position="219"/>
    </location>
</feature>
<feature type="helix" evidence="7">
    <location>
        <begin position="236"/>
        <end position="240"/>
    </location>
</feature>
<feature type="helix" evidence="7">
    <location>
        <begin position="243"/>
        <end position="252"/>
    </location>
</feature>
<feature type="helix" evidence="7">
    <location>
        <begin position="257"/>
        <end position="259"/>
    </location>
</feature>
<feature type="strand" evidence="7">
    <location>
        <begin position="260"/>
        <end position="275"/>
    </location>
</feature>
<feature type="strand" evidence="7">
    <location>
        <begin position="284"/>
        <end position="288"/>
    </location>
</feature>
<feature type="turn" evidence="7">
    <location>
        <begin position="293"/>
        <end position="295"/>
    </location>
</feature>
<feature type="strand" evidence="7">
    <location>
        <begin position="300"/>
        <end position="302"/>
    </location>
</feature>
<feature type="helix" evidence="7">
    <location>
        <begin position="303"/>
        <end position="311"/>
    </location>
</feature>
<feature type="strand" evidence="7">
    <location>
        <begin position="315"/>
        <end position="319"/>
    </location>
</feature>
<feature type="turn" evidence="7">
    <location>
        <begin position="320"/>
        <end position="323"/>
    </location>
</feature>
<feature type="strand" evidence="7">
    <location>
        <begin position="324"/>
        <end position="329"/>
    </location>
</feature>
<feature type="strand" evidence="7">
    <location>
        <begin position="332"/>
        <end position="335"/>
    </location>
</feature>
<feature type="helix" evidence="7">
    <location>
        <begin position="339"/>
        <end position="351"/>
    </location>
</feature>
<feature type="strand" evidence="7">
    <location>
        <begin position="356"/>
        <end position="360"/>
    </location>
</feature>
<feature type="helix" evidence="7">
    <location>
        <begin position="362"/>
        <end position="364"/>
    </location>
</feature>
<feature type="strand" evidence="8">
    <location>
        <begin position="367"/>
        <end position="369"/>
    </location>
</feature>
<feature type="turn" evidence="7">
    <location>
        <begin position="370"/>
        <end position="372"/>
    </location>
</feature>
<feature type="helix" evidence="7">
    <location>
        <begin position="378"/>
        <end position="386"/>
    </location>
</feature>
<feature type="helix" evidence="7">
    <location>
        <begin position="392"/>
        <end position="394"/>
    </location>
</feature>